<keyword id="KW-0687">Ribonucleoprotein</keyword>
<keyword id="KW-0689">Ribosomal protein</keyword>
<keyword id="KW-0694">RNA-binding</keyword>
<keyword id="KW-0699">rRNA-binding</keyword>
<proteinExistence type="inferred from homology"/>
<evidence type="ECO:0000255" key="1">
    <source>
        <dbReference type="HAMAP-Rule" id="MF_01309"/>
    </source>
</evidence>
<evidence type="ECO:0000256" key="2">
    <source>
        <dbReference type="SAM" id="MobiDB-lite"/>
    </source>
</evidence>
<evidence type="ECO:0000305" key="3"/>
<organism>
    <name type="scientific">Alteracholeplasma palmae (strain ATCC 49389 / J233)</name>
    <name type="common">Acholeplasma palmae</name>
    <dbReference type="NCBI Taxonomy" id="1318466"/>
    <lineage>
        <taxon>Bacteria</taxon>
        <taxon>Bacillati</taxon>
        <taxon>Mycoplasmatota</taxon>
        <taxon>Mollicutes</taxon>
        <taxon>Acholeplasmatales</taxon>
        <taxon>Acholeplasmataceae</taxon>
        <taxon>Alteracholeplasma</taxon>
    </lineage>
</organism>
<accession>P41118</accession>
<dbReference type="EMBL" id="L22467">
    <property type="protein sequence ID" value="AAB88907.1"/>
    <property type="molecule type" value="Genomic_DNA"/>
</dbReference>
<dbReference type="PIR" id="I39515">
    <property type="entry name" value="I39515"/>
</dbReference>
<dbReference type="SMR" id="P41118"/>
<dbReference type="STRING" id="1318466.BN85413440"/>
<dbReference type="GO" id="GO:0022627">
    <property type="term" value="C:cytosolic small ribosomal subunit"/>
    <property type="evidence" value="ECO:0007669"/>
    <property type="project" value="TreeGrafter"/>
</dbReference>
<dbReference type="GO" id="GO:0003729">
    <property type="term" value="F:mRNA binding"/>
    <property type="evidence" value="ECO:0007669"/>
    <property type="project" value="UniProtKB-UniRule"/>
</dbReference>
<dbReference type="GO" id="GO:0019843">
    <property type="term" value="F:rRNA binding"/>
    <property type="evidence" value="ECO:0007669"/>
    <property type="project" value="UniProtKB-UniRule"/>
</dbReference>
<dbReference type="GO" id="GO:0003735">
    <property type="term" value="F:structural constituent of ribosome"/>
    <property type="evidence" value="ECO:0007669"/>
    <property type="project" value="InterPro"/>
</dbReference>
<dbReference type="GO" id="GO:0006412">
    <property type="term" value="P:translation"/>
    <property type="evidence" value="ECO:0007669"/>
    <property type="project" value="UniProtKB-UniRule"/>
</dbReference>
<dbReference type="CDD" id="cd02412">
    <property type="entry name" value="KH-II_30S_S3"/>
    <property type="match status" value="1"/>
</dbReference>
<dbReference type="FunFam" id="3.30.300.20:FF:000001">
    <property type="entry name" value="30S ribosomal protein S3"/>
    <property type="match status" value="1"/>
</dbReference>
<dbReference type="Gene3D" id="3.30.300.20">
    <property type="match status" value="1"/>
</dbReference>
<dbReference type="Gene3D" id="3.30.1140.32">
    <property type="entry name" value="Ribosomal protein S3, C-terminal domain"/>
    <property type="match status" value="1"/>
</dbReference>
<dbReference type="HAMAP" id="MF_01309_B">
    <property type="entry name" value="Ribosomal_uS3_B"/>
    <property type="match status" value="1"/>
</dbReference>
<dbReference type="InterPro" id="IPR004087">
    <property type="entry name" value="KH_dom"/>
</dbReference>
<dbReference type="InterPro" id="IPR015946">
    <property type="entry name" value="KH_dom-like_a/b"/>
</dbReference>
<dbReference type="InterPro" id="IPR004044">
    <property type="entry name" value="KH_dom_type_2"/>
</dbReference>
<dbReference type="InterPro" id="IPR009019">
    <property type="entry name" value="KH_sf_prok-type"/>
</dbReference>
<dbReference type="InterPro" id="IPR036419">
    <property type="entry name" value="Ribosomal_S3_C_sf"/>
</dbReference>
<dbReference type="InterPro" id="IPR005704">
    <property type="entry name" value="Ribosomal_uS3_bac-typ"/>
</dbReference>
<dbReference type="InterPro" id="IPR001351">
    <property type="entry name" value="Ribosomal_uS3_C"/>
</dbReference>
<dbReference type="InterPro" id="IPR018280">
    <property type="entry name" value="Ribosomal_uS3_CS"/>
</dbReference>
<dbReference type="NCBIfam" id="TIGR01009">
    <property type="entry name" value="rpsC_bact"/>
    <property type="match status" value="1"/>
</dbReference>
<dbReference type="PANTHER" id="PTHR11760">
    <property type="entry name" value="30S/40S RIBOSOMAL PROTEIN S3"/>
    <property type="match status" value="1"/>
</dbReference>
<dbReference type="PANTHER" id="PTHR11760:SF19">
    <property type="entry name" value="SMALL RIBOSOMAL SUBUNIT PROTEIN US3C"/>
    <property type="match status" value="1"/>
</dbReference>
<dbReference type="Pfam" id="PF07650">
    <property type="entry name" value="KH_2"/>
    <property type="match status" value="1"/>
</dbReference>
<dbReference type="Pfam" id="PF00189">
    <property type="entry name" value="Ribosomal_S3_C"/>
    <property type="match status" value="1"/>
</dbReference>
<dbReference type="SMART" id="SM00322">
    <property type="entry name" value="KH"/>
    <property type="match status" value="1"/>
</dbReference>
<dbReference type="SUPFAM" id="SSF54814">
    <property type="entry name" value="Prokaryotic type KH domain (KH-domain type II)"/>
    <property type="match status" value="1"/>
</dbReference>
<dbReference type="SUPFAM" id="SSF54821">
    <property type="entry name" value="Ribosomal protein S3 C-terminal domain"/>
    <property type="match status" value="1"/>
</dbReference>
<dbReference type="PROSITE" id="PS50823">
    <property type="entry name" value="KH_TYPE_2"/>
    <property type="match status" value="1"/>
</dbReference>
<dbReference type="PROSITE" id="PS00548">
    <property type="entry name" value="RIBOSOMAL_S3"/>
    <property type="match status" value="1"/>
</dbReference>
<reference key="1">
    <citation type="journal article" date="1994" name="Int. J. Syst. Bacteriol.">
        <title>Phylogenetic relationships among members of the class Mollicutes deduced from rps3 gene sequences.</title>
        <authorList>
            <person name="Toth K.T."/>
            <person name="Harrison N."/>
            <person name="Sears B.B."/>
        </authorList>
    </citation>
    <scope>NUCLEOTIDE SEQUENCE [GENOMIC DNA]</scope>
</reference>
<name>RS3_ALTPJ</name>
<feature type="chain" id="PRO_0000130054" description="Small ribosomal subunit protein uS3">
    <location>
        <begin position="1"/>
        <end position="248"/>
    </location>
</feature>
<feature type="domain" description="KH type-2" evidence="1">
    <location>
        <begin position="39"/>
        <end position="111"/>
    </location>
</feature>
<feature type="region of interest" description="Disordered" evidence="2">
    <location>
        <begin position="222"/>
        <end position="248"/>
    </location>
</feature>
<gene>
    <name evidence="1" type="primary">rpsC</name>
    <name evidence="1" type="synonym">rps3</name>
</gene>
<sequence length="248" mass="27947">MGQKTNPNGLRLGIIRSWESKWYANEKDVPALINEDYNIRKYLNKVYKKAGVSQIEIERLKGKAKDRIKVTLYTAKPGIVIGRDGETRNKAVSELEYLTKKEIVFNVVEVKRPEKVAELVAQNMAEQLENRASFRRVQKIAIQRALKSGAKGVKTLVSGRLGGAEMARSEGYSEGRVPLHTLRADVDYATAEAHTTYGVLGIKVWVFHGEVLPGQTILDTRKPFEASAPRPQRRNRKEANNYVNAKKN</sequence>
<protein>
    <recommendedName>
        <fullName evidence="1">Small ribosomal subunit protein uS3</fullName>
    </recommendedName>
    <alternativeName>
        <fullName evidence="3">30S ribosomal protein S3</fullName>
    </alternativeName>
</protein>
<comment type="function">
    <text evidence="1">Binds the lower part of the 30S subunit head. Binds mRNA in the 70S ribosome, positioning it for translation.</text>
</comment>
<comment type="subunit">
    <text evidence="1">Part of the 30S ribosomal subunit. Forms a tight complex with proteins S10 and S14.</text>
</comment>
<comment type="similarity">
    <text evidence="1">Belongs to the universal ribosomal protein uS3 family.</text>
</comment>